<organism>
    <name type="scientific">Methylorubrum populi (strain ATCC BAA-705 / NCIMB 13946 / BJ001)</name>
    <name type="common">Methylobacterium populi</name>
    <dbReference type="NCBI Taxonomy" id="441620"/>
    <lineage>
        <taxon>Bacteria</taxon>
        <taxon>Pseudomonadati</taxon>
        <taxon>Pseudomonadota</taxon>
        <taxon>Alphaproteobacteria</taxon>
        <taxon>Hyphomicrobiales</taxon>
        <taxon>Methylobacteriaceae</taxon>
        <taxon>Methylorubrum</taxon>
    </lineage>
</organism>
<comment type="function">
    <text evidence="1">Allows the formation of correctly charged Gln-tRNA(Gln) through the transamidation of misacylated Glu-tRNA(Gln) in organisms which lack glutaminyl-tRNA synthetase. The reaction takes place in the presence of glutamine and ATP through an activated gamma-phospho-Glu-tRNA(Gln).</text>
</comment>
<comment type="catalytic activity">
    <reaction evidence="1">
        <text>L-glutamyl-tRNA(Gln) + L-glutamine + ATP + H2O = L-glutaminyl-tRNA(Gln) + L-glutamate + ADP + phosphate + H(+)</text>
        <dbReference type="Rhea" id="RHEA:17521"/>
        <dbReference type="Rhea" id="RHEA-COMP:9681"/>
        <dbReference type="Rhea" id="RHEA-COMP:9684"/>
        <dbReference type="ChEBI" id="CHEBI:15377"/>
        <dbReference type="ChEBI" id="CHEBI:15378"/>
        <dbReference type="ChEBI" id="CHEBI:29985"/>
        <dbReference type="ChEBI" id="CHEBI:30616"/>
        <dbReference type="ChEBI" id="CHEBI:43474"/>
        <dbReference type="ChEBI" id="CHEBI:58359"/>
        <dbReference type="ChEBI" id="CHEBI:78520"/>
        <dbReference type="ChEBI" id="CHEBI:78521"/>
        <dbReference type="ChEBI" id="CHEBI:456216"/>
        <dbReference type="EC" id="6.3.5.7"/>
    </reaction>
</comment>
<comment type="subunit">
    <text evidence="1">Heterotrimer of A, B and C subunits.</text>
</comment>
<comment type="similarity">
    <text evidence="1">Belongs to the amidase family. GatA subfamily.</text>
</comment>
<reference key="1">
    <citation type="submission" date="2008-04" db="EMBL/GenBank/DDBJ databases">
        <title>Complete sequence of chromosome of Methylobacterium populi BJ001.</title>
        <authorList>
            <consortium name="US DOE Joint Genome Institute"/>
            <person name="Copeland A."/>
            <person name="Lucas S."/>
            <person name="Lapidus A."/>
            <person name="Glavina del Rio T."/>
            <person name="Dalin E."/>
            <person name="Tice H."/>
            <person name="Bruce D."/>
            <person name="Goodwin L."/>
            <person name="Pitluck S."/>
            <person name="Chertkov O."/>
            <person name="Brettin T."/>
            <person name="Detter J.C."/>
            <person name="Han C."/>
            <person name="Kuske C.R."/>
            <person name="Schmutz J."/>
            <person name="Larimer F."/>
            <person name="Land M."/>
            <person name="Hauser L."/>
            <person name="Kyrpides N."/>
            <person name="Mikhailova N."/>
            <person name="Marx C."/>
            <person name="Richardson P."/>
        </authorList>
    </citation>
    <scope>NUCLEOTIDE SEQUENCE [LARGE SCALE GENOMIC DNA]</scope>
    <source>
        <strain>ATCC BAA-705 / NCIMB 13946 / BJ001</strain>
    </source>
</reference>
<gene>
    <name evidence="1" type="primary">gatA</name>
    <name type="ordered locus">Mpop_3523</name>
</gene>
<name>GATA_METPB</name>
<protein>
    <recommendedName>
        <fullName evidence="1">Glutamyl-tRNA(Gln) amidotransferase subunit A</fullName>
        <shortName evidence="1">Glu-ADT subunit A</shortName>
        <ecNumber evidence="1">6.3.5.7</ecNumber>
    </recommendedName>
</protein>
<keyword id="KW-0067">ATP-binding</keyword>
<keyword id="KW-0436">Ligase</keyword>
<keyword id="KW-0547">Nucleotide-binding</keyword>
<keyword id="KW-0648">Protein biosynthesis</keyword>
<evidence type="ECO:0000255" key="1">
    <source>
        <dbReference type="HAMAP-Rule" id="MF_00120"/>
    </source>
</evidence>
<accession>B1ZLM1</accession>
<sequence length="493" mass="52476">MTALNELTLAEARDGLKAKDFSAREIAQAHLDAIERAKALNAYIVATPDRALKMADVSDEKIAKGEARPLEGLPLGIKDLFATQGVHTTAGSKILEGFEPHYESNVSSQLWRDGAVMLGKLNLDEFAMGSSNETSAYGKTISPWRRQGSDTPLVPGGSSGGSAAAVAAHLCLGATATDTGGSIRQPAAFTGTVGIKPTYGRCSRWGIIAYASSLDQAGPIARTVQDCAILLGSMAGHDPRDTTSVDVPVPDFEAAITRGVKGLTIGIPKEYRVEGMPAEIQRLWDQGADWLREAGATVREISLPHTQYALPAYYIVAPAEASSNLARYDGVRYGLRVPGRDIAGMYENTRAAGFGREVKRRIMIGTYVLSAGYYDAYYVRAQKIRTLIKRDFEAAYASGIDAILTPATPSAAFGIGEMASADPVEMYLNDVFTVTVNMAGLPGISVPAGLDAQGLPLGLQLIGRPFDEETLFAAAQTIENAAGRISLPKAWWA</sequence>
<feature type="chain" id="PRO_1000095150" description="Glutamyl-tRNA(Gln) amidotransferase subunit A">
    <location>
        <begin position="1"/>
        <end position="493"/>
    </location>
</feature>
<feature type="active site" description="Charge relay system" evidence="1">
    <location>
        <position position="78"/>
    </location>
</feature>
<feature type="active site" description="Charge relay system" evidence="1">
    <location>
        <position position="158"/>
    </location>
</feature>
<feature type="active site" description="Acyl-ester intermediate" evidence="1">
    <location>
        <position position="182"/>
    </location>
</feature>
<dbReference type="EC" id="6.3.5.7" evidence="1"/>
<dbReference type="EMBL" id="CP001029">
    <property type="protein sequence ID" value="ACB81673.1"/>
    <property type="molecule type" value="Genomic_DNA"/>
</dbReference>
<dbReference type="RefSeq" id="WP_012455389.1">
    <property type="nucleotide sequence ID" value="NC_010725.1"/>
</dbReference>
<dbReference type="SMR" id="B1ZLM1"/>
<dbReference type="STRING" id="441620.Mpop_3523"/>
<dbReference type="KEGG" id="mpo:Mpop_3523"/>
<dbReference type="eggNOG" id="COG0154">
    <property type="taxonomic scope" value="Bacteria"/>
</dbReference>
<dbReference type="HOGENOM" id="CLU_009600_0_3_5"/>
<dbReference type="OrthoDB" id="9811471at2"/>
<dbReference type="Proteomes" id="UP000007136">
    <property type="component" value="Chromosome"/>
</dbReference>
<dbReference type="GO" id="GO:0030956">
    <property type="term" value="C:glutamyl-tRNA(Gln) amidotransferase complex"/>
    <property type="evidence" value="ECO:0007669"/>
    <property type="project" value="InterPro"/>
</dbReference>
<dbReference type="GO" id="GO:0005524">
    <property type="term" value="F:ATP binding"/>
    <property type="evidence" value="ECO:0007669"/>
    <property type="project" value="UniProtKB-KW"/>
</dbReference>
<dbReference type="GO" id="GO:0050567">
    <property type="term" value="F:glutaminyl-tRNA synthase (glutamine-hydrolyzing) activity"/>
    <property type="evidence" value="ECO:0007669"/>
    <property type="project" value="UniProtKB-UniRule"/>
</dbReference>
<dbReference type="GO" id="GO:0006412">
    <property type="term" value="P:translation"/>
    <property type="evidence" value="ECO:0007669"/>
    <property type="project" value="UniProtKB-UniRule"/>
</dbReference>
<dbReference type="Gene3D" id="3.90.1300.10">
    <property type="entry name" value="Amidase signature (AS) domain"/>
    <property type="match status" value="1"/>
</dbReference>
<dbReference type="HAMAP" id="MF_00120">
    <property type="entry name" value="GatA"/>
    <property type="match status" value="1"/>
</dbReference>
<dbReference type="InterPro" id="IPR000120">
    <property type="entry name" value="Amidase"/>
</dbReference>
<dbReference type="InterPro" id="IPR020556">
    <property type="entry name" value="Amidase_CS"/>
</dbReference>
<dbReference type="InterPro" id="IPR023631">
    <property type="entry name" value="Amidase_dom"/>
</dbReference>
<dbReference type="InterPro" id="IPR036928">
    <property type="entry name" value="AS_sf"/>
</dbReference>
<dbReference type="InterPro" id="IPR004412">
    <property type="entry name" value="GatA"/>
</dbReference>
<dbReference type="NCBIfam" id="TIGR00132">
    <property type="entry name" value="gatA"/>
    <property type="match status" value="1"/>
</dbReference>
<dbReference type="PANTHER" id="PTHR11895:SF151">
    <property type="entry name" value="GLUTAMYL-TRNA(GLN) AMIDOTRANSFERASE SUBUNIT A"/>
    <property type="match status" value="1"/>
</dbReference>
<dbReference type="PANTHER" id="PTHR11895">
    <property type="entry name" value="TRANSAMIDASE"/>
    <property type="match status" value="1"/>
</dbReference>
<dbReference type="Pfam" id="PF01425">
    <property type="entry name" value="Amidase"/>
    <property type="match status" value="1"/>
</dbReference>
<dbReference type="SUPFAM" id="SSF75304">
    <property type="entry name" value="Amidase signature (AS) enzymes"/>
    <property type="match status" value="1"/>
</dbReference>
<dbReference type="PROSITE" id="PS00571">
    <property type="entry name" value="AMIDASES"/>
    <property type="match status" value="1"/>
</dbReference>
<proteinExistence type="inferred from homology"/>